<gene>
    <name evidence="1" type="primary">gcvPA</name>
    <name type="ordered locus">DVU_1425</name>
</gene>
<reference key="1">
    <citation type="journal article" date="2004" name="Nat. Biotechnol.">
        <title>The genome sequence of the anaerobic, sulfate-reducing bacterium Desulfovibrio vulgaris Hildenborough.</title>
        <authorList>
            <person name="Heidelberg J.F."/>
            <person name="Seshadri R."/>
            <person name="Haveman S.A."/>
            <person name="Hemme C.L."/>
            <person name="Paulsen I.T."/>
            <person name="Kolonay J.F."/>
            <person name="Eisen J.A."/>
            <person name="Ward N.L."/>
            <person name="Methe B.A."/>
            <person name="Brinkac L.M."/>
            <person name="Daugherty S.C."/>
            <person name="DeBoy R.T."/>
            <person name="Dodson R.J."/>
            <person name="Durkin A.S."/>
            <person name="Madupu R."/>
            <person name="Nelson W.C."/>
            <person name="Sullivan S.A."/>
            <person name="Fouts D.E."/>
            <person name="Haft D.H."/>
            <person name="Selengut J."/>
            <person name="Peterson J.D."/>
            <person name="Davidsen T.M."/>
            <person name="Zafar N."/>
            <person name="Zhou L."/>
            <person name="Radune D."/>
            <person name="Dimitrov G."/>
            <person name="Hance M."/>
            <person name="Tran K."/>
            <person name="Khouri H.M."/>
            <person name="Gill J."/>
            <person name="Utterback T.R."/>
            <person name="Feldblyum T.V."/>
            <person name="Wall J.D."/>
            <person name="Voordouw G."/>
            <person name="Fraser C.M."/>
        </authorList>
    </citation>
    <scope>NUCLEOTIDE SEQUENCE [LARGE SCALE GENOMIC DNA]</scope>
    <source>
        <strain>ATCC 29579 / DSM 644 / CCUG 34227 / NCIMB 8303 / VKM B-1760 / Hildenborough</strain>
    </source>
</reference>
<name>GCSPA_NITV2</name>
<keyword id="KW-0560">Oxidoreductase</keyword>
<keyword id="KW-1185">Reference proteome</keyword>
<dbReference type="EC" id="1.4.4.2" evidence="1"/>
<dbReference type="EMBL" id="AE017285">
    <property type="protein sequence ID" value="AAS95903.1"/>
    <property type="molecule type" value="Genomic_DNA"/>
</dbReference>
<dbReference type="RefSeq" id="WP_010938718.1">
    <property type="nucleotide sequence ID" value="NC_002937.3"/>
</dbReference>
<dbReference type="RefSeq" id="YP_010644.1">
    <property type="nucleotide sequence ID" value="NC_002937.3"/>
</dbReference>
<dbReference type="SMR" id="Q72C59"/>
<dbReference type="IntAct" id="Q72C59">
    <property type="interactions" value="1"/>
</dbReference>
<dbReference type="STRING" id="882.DVU_1425"/>
<dbReference type="PaxDb" id="882-DVU_1425"/>
<dbReference type="EnsemblBacteria" id="AAS95903">
    <property type="protein sequence ID" value="AAS95903"/>
    <property type="gene ID" value="DVU_1425"/>
</dbReference>
<dbReference type="KEGG" id="dvu:DVU_1425"/>
<dbReference type="PATRIC" id="fig|882.5.peg.1327"/>
<dbReference type="eggNOG" id="COG0403">
    <property type="taxonomic scope" value="Bacteria"/>
</dbReference>
<dbReference type="HOGENOM" id="CLU_004620_0_2_7"/>
<dbReference type="OrthoDB" id="9801272at2"/>
<dbReference type="PhylomeDB" id="Q72C59"/>
<dbReference type="Proteomes" id="UP000002194">
    <property type="component" value="Chromosome"/>
</dbReference>
<dbReference type="GO" id="GO:0004375">
    <property type="term" value="F:glycine dehydrogenase (decarboxylating) activity"/>
    <property type="evidence" value="ECO:0007669"/>
    <property type="project" value="UniProtKB-EC"/>
</dbReference>
<dbReference type="GO" id="GO:0019464">
    <property type="term" value="P:glycine decarboxylation via glycine cleavage system"/>
    <property type="evidence" value="ECO:0007669"/>
    <property type="project" value="UniProtKB-UniRule"/>
</dbReference>
<dbReference type="GO" id="GO:0009116">
    <property type="term" value="P:nucleoside metabolic process"/>
    <property type="evidence" value="ECO:0007669"/>
    <property type="project" value="InterPro"/>
</dbReference>
<dbReference type="CDD" id="cd00613">
    <property type="entry name" value="GDC-P"/>
    <property type="match status" value="1"/>
</dbReference>
<dbReference type="Gene3D" id="3.90.1150.10">
    <property type="entry name" value="Aspartate Aminotransferase, domain 1"/>
    <property type="match status" value="1"/>
</dbReference>
<dbReference type="Gene3D" id="3.40.640.10">
    <property type="entry name" value="Type I PLP-dependent aspartate aminotransferase-like (Major domain)"/>
    <property type="match status" value="1"/>
</dbReference>
<dbReference type="HAMAP" id="MF_00712">
    <property type="entry name" value="GcvPA"/>
    <property type="match status" value="1"/>
</dbReference>
<dbReference type="InterPro" id="IPR023010">
    <property type="entry name" value="GcvPA"/>
</dbReference>
<dbReference type="InterPro" id="IPR049315">
    <property type="entry name" value="GDC-P_N"/>
</dbReference>
<dbReference type="InterPro" id="IPR020581">
    <property type="entry name" value="GDC_P"/>
</dbReference>
<dbReference type="InterPro" id="IPR015424">
    <property type="entry name" value="PyrdxlP-dep_Trfase"/>
</dbReference>
<dbReference type="InterPro" id="IPR015421">
    <property type="entry name" value="PyrdxlP-dep_Trfase_major"/>
</dbReference>
<dbReference type="InterPro" id="IPR015422">
    <property type="entry name" value="PyrdxlP-dep_Trfase_small"/>
</dbReference>
<dbReference type="NCBIfam" id="NF001696">
    <property type="entry name" value="PRK00451.1"/>
    <property type="match status" value="1"/>
</dbReference>
<dbReference type="PANTHER" id="PTHR42806">
    <property type="entry name" value="GLYCINE CLEAVAGE SYSTEM P-PROTEIN"/>
    <property type="match status" value="1"/>
</dbReference>
<dbReference type="PANTHER" id="PTHR42806:SF1">
    <property type="entry name" value="GLYCINE DEHYDROGENASE (DECARBOXYLATING)"/>
    <property type="match status" value="1"/>
</dbReference>
<dbReference type="Pfam" id="PF02347">
    <property type="entry name" value="GDC-P"/>
    <property type="match status" value="1"/>
</dbReference>
<dbReference type="PIRSF" id="PIRSF006815">
    <property type="entry name" value="GcvPA"/>
    <property type="match status" value="1"/>
</dbReference>
<dbReference type="SUPFAM" id="SSF53383">
    <property type="entry name" value="PLP-dependent transferases"/>
    <property type="match status" value="1"/>
</dbReference>
<evidence type="ECO:0000255" key="1">
    <source>
        <dbReference type="HAMAP-Rule" id="MF_00712"/>
    </source>
</evidence>
<proteinExistence type="evidence at protein level"/>
<organism>
    <name type="scientific">Nitratidesulfovibrio vulgaris (strain ATCC 29579 / DSM 644 / CCUG 34227 / NCIMB 8303 / VKM B-1760 / Hildenborough)</name>
    <name type="common">Desulfovibrio vulgaris</name>
    <dbReference type="NCBI Taxonomy" id="882"/>
    <lineage>
        <taxon>Bacteria</taxon>
        <taxon>Pseudomonadati</taxon>
        <taxon>Thermodesulfobacteriota</taxon>
        <taxon>Desulfovibrionia</taxon>
        <taxon>Desulfovibrionales</taxon>
        <taxon>Desulfovibrionaceae</taxon>
        <taxon>Nitratidesulfovibrio</taxon>
    </lineage>
</organism>
<comment type="function">
    <text evidence="1">The glycine cleavage system catalyzes the degradation of glycine. The P protein binds the alpha-amino group of glycine through its pyridoxal phosphate cofactor; CO(2) is released and the remaining methylamine moiety is then transferred to the lipoamide cofactor of the H protein.</text>
</comment>
<comment type="catalytic activity">
    <reaction evidence="1">
        <text>N(6)-[(R)-lipoyl]-L-lysyl-[glycine-cleavage complex H protein] + glycine + H(+) = N(6)-[(R)-S(8)-aminomethyldihydrolipoyl]-L-lysyl-[glycine-cleavage complex H protein] + CO2</text>
        <dbReference type="Rhea" id="RHEA:24304"/>
        <dbReference type="Rhea" id="RHEA-COMP:10494"/>
        <dbReference type="Rhea" id="RHEA-COMP:10495"/>
        <dbReference type="ChEBI" id="CHEBI:15378"/>
        <dbReference type="ChEBI" id="CHEBI:16526"/>
        <dbReference type="ChEBI" id="CHEBI:57305"/>
        <dbReference type="ChEBI" id="CHEBI:83099"/>
        <dbReference type="ChEBI" id="CHEBI:83143"/>
        <dbReference type="EC" id="1.4.4.2"/>
    </reaction>
</comment>
<comment type="subunit">
    <text evidence="1">The glycine cleavage system is composed of four proteins: P, T, L and H. In this organism, the P 'protein' is a heterodimer of two subunits.</text>
</comment>
<comment type="interaction">
    <interactant intactId="EBI-10069291">
        <id>Q72C59</id>
    </interactant>
    <interactant intactId="EBI-10069287">
        <id>Q72C60</id>
        <label>gcvPB</label>
    </interactant>
    <organismsDiffer>false</organismsDiffer>
    <experiments>4</experiments>
</comment>
<comment type="similarity">
    <text evidence="1">Belongs to the GcvP family. N-terminal subunit subfamily.</text>
</comment>
<feature type="chain" id="PRO_1000045646" description="Probable glycine dehydrogenase (decarboxylating) subunit 1">
    <location>
        <begin position="1"/>
        <end position="443"/>
    </location>
</feature>
<sequence length="443" mass="48152">MPFVPHSPEDVSVMLDAIGVNTIEDLFADIPAEMRPKSFALPKGLSEMDVCSRLEALSARNRTDVVSFLGAGFYDHHIPKAVDALSSRGEFYTAYTPYQPEAAQGTLQAIFEFQTAVCRLLDMDCANASVYDGGSALFEAMMMAVRATRRRKLVIDEALSPIYRTMLASYTSNLQLELVTVPHRDGLSDMDALKASVDDTCAAVVVQNPNFFGAITDFTDLFTHARAHKALGVISVYPVMQSVLKTPGEMGADIAVADGQSIGQPLSFGGPYLGIMTCTKPLVRQIPGRIVGRTQDVDGRTGYVLTLQAREQHIRRAKATSNICSNQALCALRSLIHLTLLGPEGLVRTAELSMERARYAAERLTALPGVELLHDAPFGNEFAVRLPVSAFEVVDRLTARGYVPGFPVGRYYPGMDNVLLVACTEKHSFEQVGILAEMLGGIL</sequence>
<accession>Q72C59</accession>
<protein>
    <recommendedName>
        <fullName evidence="1">Probable glycine dehydrogenase (decarboxylating) subunit 1</fullName>
        <ecNumber evidence="1">1.4.4.2</ecNumber>
    </recommendedName>
    <alternativeName>
        <fullName evidence="1">Glycine cleavage system P-protein subunit 1</fullName>
    </alternativeName>
    <alternativeName>
        <fullName evidence="1">Glycine decarboxylase subunit 1</fullName>
    </alternativeName>
    <alternativeName>
        <fullName evidence="1">Glycine dehydrogenase (aminomethyl-transferring) subunit 1</fullName>
    </alternativeName>
</protein>